<feature type="chain" id="PRO_1000121981" description="Chromosomal replication initiator protein DnaA">
    <location>
        <begin position="1"/>
        <end position="463"/>
    </location>
</feature>
<feature type="region of interest" description="Domain I, interacts with DnaA modulators" evidence="1">
    <location>
        <begin position="1"/>
        <end position="83"/>
    </location>
</feature>
<feature type="region of interest" description="Domain II" evidence="1">
    <location>
        <begin position="83"/>
        <end position="126"/>
    </location>
</feature>
<feature type="region of interest" description="Domain III, AAA+ region" evidence="1">
    <location>
        <begin position="127"/>
        <end position="343"/>
    </location>
</feature>
<feature type="region of interest" description="Domain IV, binds dsDNA" evidence="1">
    <location>
        <begin position="344"/>
        <end position="463"/>
    </location>
</feature>
<feature type="binding site" evidence="1">
    <location>
        <position position="171"/>
    </location>
    <ligand>
        <name>ATP</name>
        <dbReference type="ChEBI" id="CHEBI:30616"/>
    </ligand>
</feature>
<feature type="binding site" evidence="1">
    <location>
        <position position="173"/>
    </location>
    <ligand>
        <name>ATP</name>
        <dbReference type="ChEBI" id="CHEBI:30616"/>
    </ligand>
</feature>
<feature type="binding site" evidence="1">
    <location>
        <position position="174"/>
    </location>
    <ligand>
        <name>ATP</name>
        <dbReference type="ChEBI" id="CHEBI:30616"/>
    </ligand>
</feature>
<feature type="binding site" evidence="1">
    <location>
        <position position="175"/>
    </location>
    <ligand>
        <name>ATP</name>
        <dbReference type="ChEBI" id="CHEBI:30616"/>
    </ligand>
</feature>
<proteinExistence type="inferred from homology"/>
<dbReference type="EMBL" id="CU468135">
    <property type="protein sequence ID" value="CAO98499.1"/>
    <property type="molecule type" value="Genomic_DNA"/>
</dbReference>
<dbReference type="RefSeq" id="WP_012443122.1">
    <property type="nucleotide sequence ID" value="NC_010694.1"/>
</dbReference>
<dbReference type="SMR" id="B2VCE3"/>
<dbReference type="STRING" id="465817.ETA_34530"/>
<dbReference type="KEGG" id="eta:ETA_34530"/>
<dbReference type="eggNOG" id="COG0593">
    <property type="taxonomic scope" value="Bacteria"/>
</dbReference>
<dbReference type="HOGENOM" id="CLU_026910_0_1_6"/>
<dbReference type="OrthoDB" id="9807019at2"/>
<dbReference type="Proteomes" id="UP000001726">
    <property type="component" value="Chromosome"/>
</dbReference>
<dbReference type="GO" id="GO:0005737">
    <property type="term" value="C:cytoplasm"/>
    <property type="evidence" value="ECO:0007669"/>
    <property type="project" value="UniProtKB-SubCell"/>
</dbReference>
<dbReference type="GO" id="GO:0005886">
    <property type="term" value="C:plasma membrane"/>
    <property type="evidence" value="ECO:0007669"/>
    <property type="project" value="TreeGrafter"/>
</dbReference>
<dbReference type="GO" id="GO:0005524">
    <property type="term" value="F:ATP binding"/>
    <property type="evidence" value="ECO:0007669"/>
    <property type="project" value="UniProtKB-UniRule"/>
</dbReference>
<dbReference type="GO" id="GO:0016887">
    <property type="term" value="F:ATP hydrolysis activity"/>
    <property type="evidence" value="ECO:0007669"/>
    <property type="project" value="InterPro"/>
</dbReference>
<dbReference type="GO" id="GO:0003688">
    <property type="term" value="F:DNA replication origin binding"/>
    <property type="evidence" value="ECO:0007669"/>
    <property type="project" value="UniProtKB-UniRule"/>
</dbReference>
<dbReference type="GO" id="GO:0008289">
    <property type="term" value="F:lipid binding"/>
    <property type="evidence" value="ECO:0007669"/>
    <property type="project" value="UniProtKB-KW"/>
</dbReference>
<dbReference type="GO" id="GO:0006270">
    <property type="term" value="P:DNA replication initiation"/>
    <property type="evidence" value="ECO:0007669"/>
    <property type="project" value="UniProtKB-UniRule"/>
</dbReference>
<dbReference type="GO" id="GO:0006275">
    <property type="term" value="P:regulation of DNA replication"/>
    <property type="evidence" value="ECO:0007669"/>
    <property type="project" value="UniProtKB-UniRule"/>
</dbReference>
<dbReference type="CDD" id="cd00009">
    <property type="entry name" value="AAA"/>
    <property type="match status" value="1"/>
</dbReference>
<dbReference type="CDD" id="cd06571">
    <property type="entry name" value="Bac_DnaA_C"/>
    <property type="match status" value="1"/>
</dbReference>
<dbReference type="FunFam" id="1.10.1750.10:FF:000001">
    <property type="entry name" value="Chromosomal replication initiator protein DnaA"/>
    <property type="match status" value="1"/>
</dbReference>
<dbReference type="FunFam" id="1.10.8.60:FF:000003">
    <property type="entry name" value="Chromosomal replication initiator protein DnaA"/>
    <property type="match status" value="1"/>
</dbReference>
<dbReference type="FunFam" id="3.30.300.180:FF:000001">
    <property type="entry name" value="Chromosomal replication initiator protein DnaA"/>
    <property type="match status" value="1"/>
</dbReference>
<dbReference type="FunFam" id="3.40.50.300:FF:000103">
    <property type="entry name" value="Chromosomal replication initiator protein DnaA"/>
    <property type="match status" value="1"/>
</dbReference>
<dbReference type="Gene3D" id="1.10.1750.10">
    <property type="match status" value="1"/>
</dbReference>
<dbReference type="Gene3D" id="1.10.8.60">
    <property type="match status" value="1"/>
</dbReference>
<dbReference type="Gene3D" id="3.30.300.180">
    <property type="match status" value="1"/>
</dbReference>
<dbReference type="Gene3D" id="3.40.50.300">
    <property type="entry name" value="P-loop containing nucleotide triphosphate hydrolases"/>
    <property type="match status" value="1"/>
</dbReference>
<dbReference type="HAMAP" id="MF_00377">
    <property type="entry name" value="DnaA_bact"/>
    <property type="match status" value="1"/>
</dbReference>
<dbReference type="InterPro" id="IPR003593">
    <property type="entry name" value="AAA+_ATPase"/>
</dbReference>
<dbReference type="InterPro" id="IPR001957">
    <property type="entry name" value="Chromosome_initiator_DnaA"/>
</dbReference>
<dbReference type="InterPro" id="IPR020591">
    <property type="entry name" value="Chromosome_initiator_DnaA-like"/>
</dbReference>
<dbReference type="InterPro" id="IPR018312">
    <property type="entry name" value="Chromosome_initiator_DnaA_CS"/>
</dbReference>
<dbReference type="InterPro" id="IPR013159">
    <property type="entry name" value="DnaA_C"/>
</dbReference>
<dbReference type="InterPro" id="IPR013317">
    <property type="entry name" value="DnaA_dom"/>
</dbReference>
<dbReference type="InterPro" id="IPR024633">
    <property type="entry name" value="DnaA_N_dom"/>
</dbReference>
<dbReference type="InterPro" id="IPR038454">
    <property type="entry name" value="DnaA_N_sf"/>
</dbReference>
<dbReference type="InterPro" id="IPR027417">
    <property type="entry name" value="P-loop_NTPase"/>
</dbReference>
<dbReference type="InterPro" id="IPR010921">
    <property type="entry name" value="Trp_repressor/repl_initiator"/>
</dbReference>
<dbReference type="NCBIfam" id="TIGR00362">
    <property type="entry name" value="DnaA"/>
    <property type="match status" value="1"/>
</dbReference>
<dbReference type="PANTHER" id="PTHR30050">
    <property type="entry name" value="CHROMOSOMAL REPLICATION INITIATOR PROTEIN DNAA"/>
    <property type="match status" value="1"/>
</dbReference>
<dbReference type="PANTHER" id="PTHR30050:SF2">
    <property type="entry name" value="CHROMOSOMAL REPLICATION INITIATOR PROTEIN DNAA"/>
    <property type="match status" value="1"/>
</dbReference>
<dbReference type="Pfam" id="PF00308">
    <property type="entry name" value="Bac_DnaA"/>
    <property type="match status" value="1"/>
</dbReference>
<dbReference type="Pfam" id="PF08299">
    <property type="entry name" value="Bac_DnaA_C"/>
    <property type="match status" value="1"/>
</dbReference>
<dbReference type="Pfam" id="PF11638">
    <property type="entry name" value="DnaA_N"/>
    <property type="match status" value="1"/>
</dbReference>
<dbReference type="PRINTS" id="PR00051">
    <property type="entry name" value="DNAA"/>
</dbReference>
<dbReference type="SMART" id="SM00382">
    <property type="entry name" value="AAA"/>
    <property type="match status" value="1"/>
</dbReference>
<dbReference type="SMART" id="SM00760">
    <property type="entry name" value="Bac_DnaA_C"/>
    <property type="match status" value="1"/>
</dbReference>
<dbReference type="SUPFAM" id="SSF52540">
    <property type="entry name" value="P-loop containing nucleoside triphosphate hydrolases"/>
    <property type="match status" value="1"/>
</dbReference>
<dbReference type="SUPFAM" id="SSF48295">
    <property type="entry name" value="TrpR-like"/>
    <property type="match status" value="1"/>
</dbReference>
<dbReference type="PROSITE" id="PS01008">
    <property type="entry name" value="DNAA"/>
    <property type="match status" value="1"/>
</dbReference>
<reference key="1">
    <citation type="journal article" date="2008" name="Environ. Microbiol.">
        <title>The genome of Erwinia tasmaniensis strain Et1/99, a non-pathogenic bacterium in the genus Erwinia.</title>
        <authorList>
            <person name="Kube M."/>
            <person name="Migdoll A.M."/>
            <person name="Mueller I."/>
            <person name="Kuhl H."/>
            <person name="Beck A."/>
            <person name="Reinhardt R."/>
            <person name="Geider K."/>
        </authorList>
    </citation>
    <scope>NUCLEOTIDE SEQUENCE [LARGE SCALE GENOMIC DNA]</scope>
    <source>
        <strain>DSM 17950 / CFBP 7177 / CIP 109463 / NCPPB 4357 / Et1/99</strain>
    </source>
</reference>
<sequence length="463" mass="52289">MSLTLWQQCLARLQDELPATEFSMWIRPLQAELNDNTLALYAPNRFVLDWVRDKYLNNINALLNEFCGANVPLLRFEVGSKPVAQAISQPVMVSAHASAPGVVSRPAPTRPSWDNVPALAELSYRSNVNTKHNFDNFVEGKSNQLARAAARQVADNPGGAYNPLFLYGGTGLGKTHLLHAVGNGIMARKPNAKVVYMHSERFVQDMVKALQNNAIEEFKRYYRSVDALLIDDIQFFANKERSQEEFFHTFNALLEGNQQIILTSDRYPKEINGVEDRLKSRFGWGLTVAIEPPELETRVAILMKKADENDIRLPGEVAFFIAKRLRSNVRELEGALNRVIANANFTGRAITIDFVREALRDLLALQEKLVTIDNIQKTVAEYYKIKVADLLSKRRSRSVARPRQMAMAMAKELTNHSLPEIGDAFGGRDHTTVLHACRKIEQLREESHDIKEDFSNLIRTLSS</sequence>
<accession>B2VCE3</accession>
<name>DNAA_ERWT9</name>
<protein>
    <recommendedName>
        <fullName evidence="1">Chromosomal replication initiator protein DnaA</fullName>
    </recommendedName>
</protein>
<keyword id="KW-0067">ATP-binding</keyword>
<keyword id="KW-0963">Cytoplasm</keyword>
<keyword id="KW-0235">DNA replication</keyword>
<keyword id="KW-0238">DNA-binding</keyword>
<keyword id="KW-0446">Lipid-binding</keyword>
<keyword id="KW-0547">Nucleotide-binding</keyword>
<keyword id="KW-1185">Reference proteome</keyword>
<gene>
    <name evidence="1" type="primary">dnaA</name>
    <name type="ordered locus">ETA_34530</name>
</gene>
<evidence type="ECO:0000255" key="1">
    <source>
        <dbReference type="HAMAP-Rule" id="MF_00377"/>
    </source>
</evidence>
<comment type="function">
    <text evidence="1">Plays an essential role in the initiation and regulation of chromosomal replication. ATP-DnaA binds to the origin of replication (oriC) to initiate formation of the DNA replication initiation complex once per cell cycle. Binds the DnaA box (a 9 base pair repeat at the origin) and separates the double-stranded (ds)DNA. Forms a right-handed helical filament on oriC DNA; dsDNA binds to the exterior of the filament while single-stranded (ss)DNA is stabiized in the filament's interior. The ATP-DnaA-oriC complex binds and stabilizes one strand of the AT-rich DNA unwinding element (DUE), permitting loading of DNA polymerase. After initiation quickly degrades to an ADP-DnaA complex that is not apt for DNA replication. Binds acidic phospholipids.</text>
</comment>
<comment type="subunit">
    <text evidence="1">Oligomerizes as a right-handed, spiral filament on DNA at oriC.</text>
</comment>
<comment type="subcellular location">
    <subcellularLocation>
        <location evidence="1">Cytoplasm</location>
    </subcellularLocation>
</comment>
<comment type="domain">
    <text evidence="1">Domain I is involved in oligomerization and binding regulators, domain II is flexibile and of varying length in different bacteria, domain III forms the AAA+ region, while domain IV binds dsDNA.</text>
</comment>
<comment type="similarity">
    <text evidence="1">Belongs to the DnaA family.</text>
</comment>
<organism>
    <name type="scientific">Erwinia tasmaniensis (strain DSM 17950 / CFBP 7177 / CIP 109463 / NCPPB 4357 / Et1/99)</name>
    <dbReference type="NCBI Taxonomy" id="465817"/>
    <lineage>
        <taxon>Bacteria</taxon>
        <taxon>Pseudomonadati</taxon>
        <taxon>Pseudomonadota</taxon>
        <taxon>Gammaproteobacteria</taxon>
        <taxon>Enterobacterales</taxon>
        <taxon>Erwiniaceae</taxon>
        <taxon>Erwinia</taxon>
    </lineage>
</organism>